<gene>
    <name evidence="1" type="primary">der</name>
    <name type="synonym">engA</name>
    <name type="ordered locus">A1S_0506</name>
</gene>
<evidence type="ECO:0000255" key="1">
    <source>
        <dbReference type="HAMAP-Rule" id="MF_00195"/>
    </source>
</evidence>
<sequence length="469" mass="52799">MKPVIALIGRPNVGKSTLFNQITKSRDALVADFAGLTRDRKYGDATYQNKSFIVVDTGGIGESEGGIDNYMAEQSKTAINEADIIIFVVDARAGLLASDEQIARELRTLGKKIYLVANKVDGVHAEAALVEFYKLGMGEPLQVAASHGRGVQQMLEDVLQDIPEDENPEEHDKDTGLRLAIIGRPNVGKSTLVNRLLGEDRVVAFDQPGTTRDSIYIPFEREGRKYTLIDTAGVRRKGKVDEMIEKFSIVKTLQAMKDAHVVVVVVDAREGIVEQDLHLIGYALEAGRAMVIAINKWDNMSEYDRKQCKLDVERRFDFIPWARIHLISALHGTGVGELYPSIHRAYESANLKVSPAKLTQILNDATDQHQPPTVQGRRIKMRYAHMGGQNPPTIVIHGNKVDKTPADYRRYLENVFRKVYKLEGTPVKIEFKTSENPFEGRKSQVDERTAARRRRYIQKFKKAEKKFKR</sequence>
<reference key="1">
    <citation type="journal article" date="2007" name="Genes Dev.">
        <title>New insights into Acinetobacter baumannii pathogenesis revealed by high-density pyrosequencing and transposon mutagenesis.</title>
        <authorList>
            <person name="Smith M.G."/>
            <person name="Gianoulis T.A."/>
            <person name="Pukatzki S."/>
            <person name="Mekalanos J.J."/>
            <person name="Ornston L.N."/>
            <person name="Gerstein M."/>
            <person name="Snyder M."/>
        </authorList>
    </citation>
    <scope>NUCLEOTIDE SEQUENCE [LARGE SCALE GENOMIC DNA]</scope>
    <source>
        <strain>ATCC 17978 / DSM 105126 / CIP 53.77 / LMG 1025 / NCDC KC755 / 5377</strain>
    </source>
</reference>
<name>DER_ACIBT</name>
<keyword id="KW-0342">GTP-binding</keyword>
<keyword id="KW-0547">Nucleotide-binding</keyword>
<keyword id="KW-0677">Repeat</keyword>
<keyword id="KW-0690">Ribosome biogenesis</keyword>
<proteinExistence type="inferred from homology"/>
<protein>
    <recommendedName>
        <fullName evidence="1">GTPase Der</fullName>
    </recommendedName>
    <alternativeName>
        <fullName evidence="1">GTP-binding protein EngA</fullName>
    </alternativeName>
</protein>
<dbReference type="EMBL" id="CP000521">
    <property type="protein sequence ID" value="ABO10959.2"/>
    <property type="molecule type" value="Genomic_DNA"/>
</dbReference>
<dbReference type="RefSeq" id="WP_000805592.1">
    <property type="nucleotide sequence ID" value="NZ_CP053098.1"/>
</dbReference>
<dbReference type="SMR" id="A3M215"/>
<dbReference type="GeneID" id="92892509"/>
<dbReference type="KEGG" id="acb:A1S_0506"/>
<dbReference type="HOGENOM" id="CLU_016077_6_2_6"/>
<dbReference type="GO" id="GO:0005525">
    <property type="term" value="F:GTP binding"/>
    <property type="evidence" value="ECO:0007669"/>
    <property type="project" value="UniProtKB-UniRule"/>
</dbReference>
<dbReference type="GO" id="GO:0043022">
    <property type="term" value="F:ribosome binding"/>
    <property type="evidence" value="ECO:0007669"/>
    <property type="project" value="TreeGrafter"/>
</dbReference>
<dbReference type="GO" id="GO:0042254">
    <property type="term" value="P:ribosome biogenesis"/>
    <property type="evidence" value="ECO:0007669"/>
    <property type="project" value="UniProtKB-KW"/>
</dbReference>
<dbReference type="CDD" id="cd01894">
    <property type="entry name" value="EngA1"/>
    <property type="match status" value="1"/>
</dbReference>
<dbReference type="CDD" id="cd01895">
    <property type="entry name" value="EngA2"/>
    <property type="match status" value="1"/>
</dbReference>
<dbReference type="FunFam" id="3.30.300.20:FF:000004">
    <property type="entry name" value="GTPase Der"/>
    <property type="match status" value="1"/>
</dbReference>
<dbReference type="FunFam" id="3.40.50.300:FF:000040">
    <property type="entry name" value="GTPase Der"/>
    <property type="match status" value="1"/>
</dbReference>
<dbReference type="FunFam" id="3.40.50.300:FF:000057">
    <property type="entry name" value="GTPase Der"/>
    <property type="match status" value="1"/>
</dbReference>
<dbReference type="Gene3D" id="3.30.300.20">
    <property type="match status" value="1"/>
</dbReference>
<dbReference type="Gene3D" id="3.40.50.300">
    <property type="entry name" value="P-loop containing nucleotide triphosphate hydrolases"/>
    <property type="match status" value="2"/>
</dbReference>
<dbReference type="HAMAP" id="MF_00195">
    <property type="entry name" value="GTPase_Der"/>
    <property type="match status" value="1"/>
</dbReference>
<dbReference type="InterPro" id="IPR031166">
    <property type="entry name" value="G_ENGA"/>
</dbReference>
<dbReference type="InterPro" id="IPR006073">
    <property type="entry name" value="GTP-bd"/>
</dbReference>
<dbReference type="InterPro" id="IPR016484">
    <property type="entry name" value="GTPase_Der"/>
</dbReference>
<dbReference type="InterPro" id="IPR032859">
    <property type="entry name" value="KH_dom-like"/>
</dbReference>
<dbReference type="InterPro" id="IPR015946">
    <property type="entry name" value="KH_dom-like_a/b"/>
</dbReference>
<dbReference type="InterPro" id="IPR027417">
    <property type="entry name" value="P-loop_NTPase"/>
</dbReference>
<dbReference type="InterPro" id="IPR005225">
    <property type="entry name" value="Small_GTP-bd"/>
</dbReference>
<dbReference type="NCBIfam" id="TIGR03594">
    <property type="entry name" value="GTPase_EngA"/>
    <property type="match status" value="1"/>
</dbReference>
<dbReference type="NCBIfam" id="TIGR00231">
    <property type="entry name" value="small_GTP"/>
    <property type="match status" value="2"/>
</dbReference>
<dbReference type="PANTHER" id="PTHR43834">
    <property type="entry name" value="GTPASE DER"/>
    <property type="match status" value="1"/>
</dbReference>
<dbReference type="PANTHER" id="PTHR43834:SF6">
    <property type="entry name" value="GTPASE DER"/>
    <property type="match status" value="1"/>
</dbReference>
<dbReference type="Pfam" id="PF14714">
    <property type="entry name" value="KH_dom-like"/>
    <property type="match status" value="1"/>
</dbReference>
<dbReference type="Pfam" id="PF01926">
    <property type="entry name" value="MMR_HSR1"/>
    <property type="match status" value="2"/>
</dbReference>
<dbReference type="PIRSF" id="PIRSF006485">
    <property type="entry name" value="GTP-binding_EngA"/>
    <property type="match status" value="1"/>
</dbReference>
<dbReference type="PRINTS" id="PR00326">
    <property type="entry name" value="GTP1OBG"/>
</dbReference>
<dbReference type="SUPFAM" id="SSF52540">
    <property type="entry name" value="P-loop containing nucleoside triphosphate hydrolases"/>
    <property type="match status" value="2"/>
</dbReference>
<dbReference type="PROSITE" id="PS51712">
    <property type="entry name" value="G_ENGA"/>
    <property type="match status" value="2"/>
</dbReference>
<organism>
    <name type="scientific">Acinetobacter baumannii (strain ATCC 17978 / DSM 105126 / CIP 53.77 / LMG 1025 / NCDC KC755 / 5377)</name>
    <dbReference type="NCBI Taxonomy" id="400667"/>
    <lineage>
        <taxon>Bacteria</taxon>
        <taxon>Pseudomonadati</taxon>
        <taxon>Pseudomonadota</taxon>
        <taxon>Gammaproteobacteria</taxon>
        <taxon>Moraxellales</taxon>
        <taxon>Moraxellaceae</taxon>
        <taxon>Acinetobacter</taxon>
        <taxon>Acinetobacter calcoaceticus/baumannii complex</taxon>
    </lineage>
</organism>
<accession>A3M215</accession>
<comment type="function">
    <text evidence="1">GTPase that plays an essential role in the late steps of ribosome biogenesis.</text>
</comment>
<comment type="subunit">
    <text evidence="1">Associates with the 50S ribosomal subunit.</text>
</comment>
<comment type="similarity">
    <text evidence="1">Belongs to the TRAFAC class TrmE-Era-EngA-EngB-Septin-like GTPase superfamily. EngA (Der) GTPase family.</text>
</comment>
<feature type="chain" id="PRO_1000124334" description="GTPase Der">
    <location>
        <begin position="1"/>
        <end position="469"/>
    </location>
</feature>
<feature type="domain" description="EngA-type G 1">
    <location>
        <begin position="3"/>
        <end position="166"/>
    </location>
</feature>
<feature type="domain" description="EngA-type G 2">
    <location>
        <begin position="177"/>
        <end position="350"/>
    </location>
</feature>
<feature type="domain" description="KH-like" evidence="1">
    <location>
        <begin position="351"/>
        <end position="435"/>
    </location>
</feature>
<feature type="binding site" evidence="1">
    <location>
        <begin position="9"/>
        <end position="16"/>
    </location>
    <ligand>
        <name>GTP</name>
        <dbReference type="ChEBI" id="CHEBI:37565"/>
        <label>1</label>
    </ligand>
</feature>
<feature type="binding site" evidence="1">
    <location>
        <begin position="56"/>
        <end position="60"/>
    </location>
    <ligand>
        <name>GTP</name>
        <dbReference type="ChEBI" id="CHEBI:37565"/>
        <label>1</label>
    </ligand>
</feature>
<feature type="binding site" evidence="1">
    <location>
        <begin position="118"/>
        <end position="121"/>
    </location>
    <ligand>
        <name>GTP</name>
        <dbReference type="ChEBI" id="CHEBI:37565"/>
        <label>1</label>
    </ligand>
</feature>
<feature type="binding site" evidence="1">
    <location>
        <begin position="183"/>
        <end position="190"/>
    </location>
    <ligand>
        <name>GTP</name>
        <dbReference type="ChEBI" id="CHEBI:37565"/>
        <label>2</label>
    </ligand>
</feature>
<feature type="binding site" evidence="1">
    <location>
        <begin position="230"/>
        <end position="234"/>
    </location>
    <ligand>
        <name>GTP</name>
        <dbReference type="ChEBI" id="CHEBI:37565"/>
        <label>2</label>
    </ligand>
</feature>
<feature type="binding site" evidence="1">
    <location>
        <begin position="295"/>
        <end position="298"/>
    </location>
    <ligand>
        <name>GTP</name>
        <dbReference type="ChEBI" id="CHEBI:37565"/>
        <label>2</label>
    </ligand>
</feature>